<proteinExistence type="inferred from homology"/>
<evidence type="ECO:0000255" key="1">
    <source>
        <dbReference type="HAMAP-Rule" id="MF_01402"/>
    </source>
</evidence>
<protein>
    <recommendedName>
        <fullName evidence="1">2,3-bisphosphoglycerate-independent phosphoglycerate mutase</fullName>
        <shortName evidence="1">BPG-independent PGAM</shortName>
        <shortName evidence="1">Phosphoglyceromutase</shortName>
        <shortName evidence="1">aPGAM</shortName>
        <ecNumber evidence="1">5.4.2.12</ecNumber>
    </recommendedName>
</protein>
<reference key="1">
    <citation type="journal article" date="2003" name="Mol. Microbiol.">
        <title>An integrated analysis of the genome of the hyperthermophilic archaeon Pyrococcus abyssi.</title>
        <authorList>
            <person name="Cohen G.N."/>
            <person name="Barbe V."/>
            <person name="Flament D."/>
            <person name="Galperin M."/>
            <person name="Heilig R."/>
            <person name="Lecompte O."/>
            <person name="Poch O."/>
            <person name="Prieur D."/>
            <person name="Querellou J."/>
            <person name="Ripp R."/>
            <person name="Thierry J.-C."/>
            <person name="Van der Oost J."/>
            <person name="Weissenbach J."/>
            <person name="Zivanovic Y."/>
            <person name="Forterre P."/>
        </authorList>
    </citation>
    <scope>NUCLEOTIDE SEQUENCE [LARGE SCALE GENOMIC DNA]</scope>
    <source>
        <strain>GE5 / Orsay</strain>
    </source>
</reference>
<reference key="2">
    <citation type="journal article" date="2012" name="Curr. Microbiol.">
        <title>Re-annotation of two hyperthermophilic archaea Pyrococcus abyssi GE5 and Pyrococcus furiosus DSM 3638.</title>
        <authorList>
            <person name="Gao J."/>
            <person name="Wang J."/>
        </authorList>
    </citation>
    <scope>GENOME REANNOTATION</scope>
    <source>
        <strain>GE5 / Orsay</strain>
    </source>
</reference>
<name>APGM_PYRAB</name>
<organism>
    <name type="scientific">Pyrococcus abyssi (strain GE5 / Orsay)</name>
    <dbReference type="NCBI Taxonomy" id="272844"/>
    <lineage>
        <taxon>Archaea</taxon>
        <taxon>Methanobacteriati</taxon>
        <taxon>Methanobacteriota</taxon>
        <taxon>Thermococci</taxon>
        <taxon>Thermococcales</taxon>
        <taxon>Thermococcaceae</taxon>
        <taxon>Pyrococcus</taxon>
    </lineage>
</organism>
<dbReference type="EC" id="5.4.2.12" evidence="1"/>
<dbReference type="EMBL" id="AJ248283">
    <property type="protein sequence ID" value="CAB48972.1"/>
    <property type="molecule type" value="Genomic_DNA"/>
</dbReference>
<dbReference type="EMBL" id="HE613800">
    <property type="protein sequence ID" value="CCE69421.1"/>
    <property type="molecule type" value="Genomic_DNA"/>
</dbReference>
<dbReference type="PIR" id="E75190">
    <property type="entry name" value="E75190"/>
</dbReference>
<dbReference type="RefSeq" id="WP_010867173.1">
    <property type="nucleotide sequence ID" value="NC_000868.1"/>
</dbReference>
<dbReference type="SMR" id="Q9V2M6"/>
<dbReference type="STRING" id="272844.PAB2318"/>
<dbReference type="KEGG" id="pab:PAB2318"/>
<dbReference type="PATRIC" id="fig|272844.11.peg.56"/>
<dbReference type="eggNOG" id="arCOG01696">
    <property type="taxonomic scope" value="Archaea"/>
</dbReference>
<dbReference type="HOGENOM" id="CLU_034906_2_0_2"/>
<dbReference type="OrthoDB" id="52918at2157"/>
<dbReference type="PhylomeDB" id="Q9V2M6"/>
<dbReference type="UniPathway" id="UPA00109">
    <property type="reaction ID" value="UER00186"/>
</dbReference>
<dbReference type="Proteomes" id="UP000000810">
    <property type="component" value="Chromosome"/>
</dbReference>
<dbReference type="Proteomes" id="UP000009139">
    <property type="component" value="Chromosome"/>
</dbReference>
<dbReference type="GO" id="GO:0046872">
    <property type="term" value="F:metal ion binding"/>
    <property type="evidence" value="ECO:0007669"/>
    <property type="project" value="InterPro"/>
</dbReference>
<dbReference type="GO" id="GO:0004619">
    <property type="term" value="F:phosphoglycerate mutase activity"/>
    <property type="evidence" value="ECO:0007669"/>
    <property type="project" value="UniProtKB-EC"/>
</dbReference>
<dbReference type="GO" id="GO:0006096">
    <property type="term" value="P:glycolytic process"/>
    <property type="evidence" value="ECO:0007669"/>
    <property type="project" value="UniProtKB-UniRule"/>
</dbReference>
<dbReference type="CDD" id="cd16011">
    <property type="entry name" value="iPGM_like"/>
    <property type="match status" value="1"/>
</dbReference>
<dbReference type="Gene3D" id="3.40.720.10">
    <property type="entry name" value="Alkaline Phosphatase, subunit A"/>
    <property type="match status" value="1"/>
</dbReference>
<dbReference type="Gene3D" id="3.30.70.2130">
    <property type="entry name" value="Metalloenzyme domain"/>
    <property type="match status" value="1"/>
</dbReference>
<dbReference type="HAMAP" id="MF_01402_A">
    <property type="entry name" value="ApgM_A"/>
    <property type="match status" value="1"/>
</dbReference>
<dbReference type="InterPro" id="IPR017850">
    <property type="entry name" value="Alkaline_phosphatase_core_sf"/>
</dbReference>
<dbReference type="InterPro" id="IPR023665">
    <property type="entry name" value="ApgAM_prokaryotes"/>
</dbReference>
<dbReference type="InterPro" id="IPR006124">
    <property type="entry name" value="Metalloenzyme"/>
</dbReference>
<dbReference type="InterPro" id="IPR004456">
    <property type="entry name" value="Pglycerate_mutase_ApgM"/>
</dbReference>
<dbReference type="InterPro" id="IPR042253">
    <property type="entry name" value="Pglycerate_mutase_ApgM_sf"/>
</dbReference>
<dbReference type="NCBIfam" id="TIGR00306">
    <property type="entry name" value="apgM"/>
    <property type="match status" value="1"/>
</dbReference>
<dbReference type="NCBIfam" id="NF003104">
    <property type="entry name" value="PRK04024.1"/>
    <property type="match status" value="1"/>
</dbReference>
<dbReference type="PANTHER" id="PTHR31209">
    <property type="entry name" value="COFACTOR-INDEPENDENT PHOSPHOGLYCERATE MUTASE"/>
    <property type="match status" value="1"/>
</dbReference>
<dbReference type="PANTHER" id="PTHR31209:SF0">
    <property type="entry name" value="METALLOENZYME DOMAIN-CONTAINING PROTEIN"/>
    <property type="match status" value="1"/>
</dbReference>
<dbReference type="Pfam" id="PF01676">
    <property type="entry name" value="Metalloenzyme"/>
    <property type="match status" value="1"/>
</dbReference>
<dbReference type="Pfam" id="PF10143">
    <property type="entry name" value="PhosphMutase"/>
    <property type="match status" value="1"/>
</dbReference>
<dbReference type="PIRSF" id="PIRSF006392">
    <property type="entry name" value="IPGAM_arch"/>
    <property type="match status" value="1"/>
</dbReference>
<dbReference type="SUPFAM" id="SSF53649">
    <property type="entry name" value="Alkaline phosphatase-like"/>
    <property type="match status" value="1"/>
</dbReference>
<keyword id="KW-0324">Glycolysis</keyword>
<keyword id="KW-0413">Isomerase</keyword>
<accession>Q9V2M6</accession>
<accession>G8ZFN0</accession>
<feature type="chain" id="PRO_0000138142" description="2,3-bisphosphoglycerate-independent phosphoglycerate mutase">
    <location>
        <begin position="1"/>
        <end position="410"/>
    </location>
</feature>
<sequence>MQRKGILIILDGLGDRPIKELGGLTPLEYANTPNMDKLAKIGILGQQDPIKPGQPAGSDTAHLSIFGYDPYKTYRGRGFFEALGVGLDLDEDDLAFRVNFATLKDGIVVDRRAGRISTEEAHELAKAIQEEVDVGVDFIFKGATGHRAVLVLKGMADGYRVGDNDPHVEGKPPHKFSWEDEESKKVAEILEEFVKKAHEVLERHPINEKRRREGKPVANYLLIRGAGTYPNIPMKFTEQWKVKAAAVIAVALVKGVARAIGFDVYTPEGATGEYNTNEMAKAKKVVELLKDYDFVFLHFKPTDAAGHDNKPKLKAELIERADKMIGYIIDNIDLESTVIAITGDHSTPCEVKNHSGDPVPLLIAGGGVRTDHTERFGEREAMKGGLGRIRGHDIVPIMMDLMNRSEKFGA</sequence>
<gene>
    <name evidence="1" type="primary">apgM</name>
    <name type="ordered locus">PYRAB00490</name>
    <name type="ORF">PAB2318</name>
</gene>
<comment type="function">
    <text evidence="1">Catalyzes the interconversion of 2-phosphoglycerate and 3-phosphoglycerate.</text>
</comment>
<comment type="catalytic activity">
    <reaction evidence="1">
        <text>(2R)-2-phosphoglycerate = (2R)-3-phosphoglycerate</text>
        <dbReference type="Rhea" id="RHEA:15901"/>
        <dbReference type="ChEBI" id="CHEBI:58272"/>
        <dbReference type="ChEBI" id="CHEBI:58289"/>
        <dbReference type="EC" id="5.4.2.12"/>
    </reaction>
</comment>
<comment type="pathway">
    <text evidence="1">Carbohydrate degradation; glycolysis; pyruvate from D-glyceraldehyde 3-phosphate: step 3/5.</text>
</comment>
<comment type="similarity">
    <text evidence="1">Belongs to the BPG-independent phosphoglycerate mutase family. A-PGAM subfamily.</text>
</comment>